<gene>
    <name evidence="1" type="primary">rimO</name>
    <name type="ordered locus">Mrad2831_1639</name>
</gene>
<name>RIMO_METRJ</name>
<evidence type="ECO:0000255" key="1">
    <source>
        <dbReference type="HAMAP-Rule" id="MF_01865"/>
    </source>
</evidence>
<evidence type="ECO:0000255" key="2">
    <source>
        <dbReference type="PROSITE-ProRule" id="PRU01266"/>
    </source>
</evidence>
<accession>B1M6H4</accession>
<reference key="1">
    <citation type="submission" date="2008-03" db="EMBL/GenBank/DDBJ databases">
        <title>Complete sequence of chromosome of Methylobacterium radiotolerans JCM 2831.</title>
        <authorList>
            <consortium name="US DOE Joint Genome Institute"/>
            <person name="Copeland A."/>
            <person name="Lucas S."/>
            <person name="Lapidus A."/>
            <person name="Glavina del Rio T."/>
            <person name="Dalin E."/>
            <person name="Tice H."/>
            <person name="Bruce D."/>
            <person name="Goodwin L."/>
            <person name="Pitluck S."/>
            <person name="Kiss H."/>
            <person name="Brettin T."/>
            <person name="Detter J.C."/>
            <person name="Han C."/>
            <person name="Kuske C.R."/>
            <person name="Schmutz J."/>
            <person name="Larimer F."/>
            <person name="Land M."/>
            <person name="Hauser L."/>
            <person name="Kyrpides N."/>
            <person name="Mikhailova N."/>
            <person name="Marx C.J."/>
            <person name="Richardson P."/>
        </authorList>
    </citation>
    <scope>NUCLEOTIDE SEQUENCE [LARGE SCALE GENOMIC DNA]</scope>
    <source>
        <strain>ATCC 27329 / DSM 1819 / JCM 2831 / NBRC 15690 / NCIMB 10815 / 0-1</strain>
    </source>
</reference>
<organism>
    <name type="scientific">Methylobacterium radiotolerans (strain ATCC 27329 / DSM 1819 / JCM 2831 / NBRC 15690 / NCIMB 10815 / 0-1)</name>
    <dbReference type="NCBI Taxonomy" id="426355"/>
    <lineage>
        <taxon>Bacteria</taxon>
        <taxon>Pseudomonadati</taxon>
        <taxon>Pseudomonadota</taxon>
        <taxon>Alphaproteobacteria</taxon>
        <taxon>Hyphomicrobiales</taxon>
        <taxon>Methylobacteriaceae</taxon>
        <taxon>Methylobacterium</taxon>
    </lineage>
</organism>
<proteinExistence type="inferred from homology"/>
<dbReference type="EC" id="2.8.4.4" evidence="1"/>
<dbReference type="EMBL" id="CP001001">
    <property type="protein sequence ID" value="ACB23634.1"/>
    <property type="molecule type" value="Genomic_DNA"/>
</dbReference>
<dbReference type="RefSeq" id="WP_012318622.1">
    <property type="nucleotide sequence ID" value="NC_010505.1"/>
</dbReference>
<dbReference type="SMR" id="B1M6H4"/>
<dbReference type="STRING" id="426355.Mrad2831_1639"/>
<dbReference type="GeneID" id="6137667"/>
<dbReference type="KEGG" id="mrd:Mrad2831_1639"/>
<dbReference type="eggNOG" id="COG0621">
    <property type="taxonomic scope" value="Bacteria"/>
</dbReference>
<dbReference type="HOGENOM" id="CLU_018697_0_0_5"/>
<dbReference type="OrthoDB" id="9805215at2"/>
<dbReference type="Proteomes" id="UP000006589">
    <property type="component" value="Chromosome"/>
</dbReference>
<dbReference type="GO" id="GO:0005829">
    <property type="term" value="C:cytosol"/>
    <property type="evidence" value="ECO:0007669"/>
    <property type="project" value="TreeGrafter"/>
</dbReference>
<dbReference type="GO" id="GO:0051539">
    <property type="term" value="F:4 iron, 4 sulfur cluster binding"/>
    <property type="evidence" value="ECO:0007669"/>
    <property type="project" value="UniProtKB-UniRule"/>
</dbReference>
<dbReference type="GO" id="GO:0035599">
    <property type="term" value="F:aspartic acid methylthiotransferase activity"/>
    <property type="evidence" value="ECO:0007669"/>
    <property type="project" value="TreeGrafter"/>
</dbReference>
<dbReference type="GO" id="GO:0046872">
    <property type="term" value="F:metal ion binding"/>
    <property type="evidence" value="ECO:0007669"/>
    <property type="project" value="UniProtKB-KW"/>
</dbReference>
<dbReference type="GO" id="GO:0103039">
    <property type="term" value="F:protein methylthiotransferase activity"/>
    <property type="evidence" value="ECO:0007669"/>
    <property type="project" value="UniProtKB-EC"/>
</dbReference>
<dbReference type="GO" id="GO:0006400">
    <property type="term" value="P:tRNA modification"/>
    <property type="evidence" value="ECO:0007669"/>
    <property type="project" value="InterPro"/>
</dbReference>
<dbReference type="CDD" id="cd01335">
    <property type="entry name" value="Radical_SAM"/>
    <property type="match status" value="1"/>
</dbReference>
<dbReference type="FunFam" id="3.40.50.12160:FF:000002">
    <property type="entry name" value="Ribosomal protein S12 methylthiotransferase RimO"/>
    <property type="match status" value="1"/>
</dbReference>
<dbReference type="FunFam" id="3.80.30.20:FF:000001">
    <property type="entry name" value="tRNA-2-methylthio-N(6)-dimethylallyladenosine synthase 2"/>
    <property type="match status" value="1"/>
</dbReference>
<dbReference type="Gene3D" id="3.40.50.12160">
    <property type="entry name" value="Methylthiotransferase, N-terminal domain"/>
    <property type="match status" value="1"/>
</dbReference>
<dbReference type="Gene3D" id="2.40.50.140">
    <property type="entry name" value="Nucleic acid-binding proteins"/>
    <property type="match status" value="1"/>
</dbReference>
<dbReference type="Gene3D" id="3.80.30.20">
    <property type="entry name" value="tm_1862 like domain"/>
    <property type="match status" value="1"/>
</dbReference>
<dbReference type="HAMAP" id="MF_01865">
    <property type="entry name" value="MTTase_RimO"/>
    <property type="match status" value="1"/>
</dbReference>
<dbReference type="InterPro" id="IPR006638">
    <property type="entry name" value="Elp3/MiaA/NifB-like_rSAM"/>
</dbReference>
<dbReference type="InterPro" id="IPR005839">
    <property type="entry name" value="Methylthiotransferase"/>
</dbReference>
<dbReference type="InterPro" id="IPR020612">
    <property type="entry name" value="Methylthiotransferase_CS"/>
</dbReference>
<dbReference type="InterPro" id="IPR013848">
    <property type="entry name" value="Methylthiotransferase_N"/>
</dbReference>
<dbReference type="InterPro" id="IPR038135">
    <property type="entry name" value="Methylthiotransferase_N_sf"/>
</dbReference>
<dbReference type="InterPro" id="IPR012340">
    <property type="entry name" value="NA-bd_OB-fold"/>
</dbReference>
<dbReference type="InterPro" id="IPR005840">
    <property type="entry name" value="Ribosomal_uS12_MeSTrfase_RimO"/>
</dbReference>
<dbReference type="InterPro" id="IPR007197">
    <property type="entry name" value="rSAM"/>
</dbReference>
<dbReference type="InterPro" id="IPR023404">
    <property type="entry name" value="rSAM_horseshoe"/>
</dbReference>
<dbReference type="InterPro" id="IPR002792">
    <property type="entry name" value="TRAM_dom"/>
</dbReference>
<dbReference type="NCBIfam" id="TIGR01125">
    <property type="entry name" value="30S ribosomal protein S12 methylthiotransferase RimO"/>
    <property type="match status" value="1"/>
</dbReference>
<dbReference type="NCBIfam" id="TIGR00089">
    <property type="entry name" value="MiaB/RimO family radical SAM methylthiotransferase"/>
    <property type="match status" value="1"/>
</dbReference>
<dbReference type="PANTHER" id="PTHR43837">
    <property type="entry name" value="RIBOSOMAL PROTEIN S12 METHYLTHIOTRANSFERASE RIMO"/>
    <property type="match status" value="1"/>
</dbReference>
<dbReference type="PANTHER" id="PTHR43837:SF1">
    <property type="entry name" value="RIBOSOMAL PROTEIN US12 METHYLTHIOTRANSFERASE RIMO"/>
    <property type="match status" value="1"/>
</dbReference>
<dbReference type="Pfam" id="PF04055">
    <property type="entry name" value="Radical_SAM"/>
    <property type="match status" value="1"/>
</dbReference>
<dbReference type="Pfam" id="PF18693">
    <property type="entry name" value="TRAM_2"/>
    <property type="match status" value="1"/>
</dbReference>
<dbReference type="Pfam" id="PF00919">
    <property type="entry name" value="UPF0004"/>
    <property type="match status" value="1"/>
</dbReference>
<dbReference type="SFLD" id="SFLDG01082">
    <property type="entry name" value="B12-binding_domain_containing"/>
    <property type="match status" value="1"/>
</dbReference>
<dbReference type="SFLD" id="SFLDG01061">
    <property type="entry name" value="methylthiotransferase"/>
    <property type="match status" value="1"/>
</dbReference>
<dbReference type="SFLD" id="SFLDF00274">
    <property type="entry name" value="ribosomal_protein_S12_methylth"/>
    <property type="match status" value="1"/>
</dbReference>
<dbReference type="SMART" id="SM00729">
    <property type="entry name" value="Elp3"/>
    <property type="match status" value="1"/>
</dbReference>
<dbReference type="SUPFAM" id="SSF102114">
    <property type="entry name" value="Radical SAM enzymes"/>
    <property type="match status" value="1"/>
</dbReference>
<dbReference type="PROSITE" id="PS51449">
    <property type="entry name" value="MTTASE_N"/>
    <property type="match status" value="1"/>
</dbReference>
<dbReference type="PROSITE" id="PS01278">
    <property type="entry name" value="MTTASE_RADICAL"/>
    <property type="match status" value="1"/>
</dbReference>
<dbReference type="PROSITE" id="PS51918">
    <property type="entry name" value="RADICAL_SAM"/>
    <property type="match status" value="1"/>
</dbReference>
<dbReference type="PROSITE" id="PS50926">
    <property type="entry name" value="TRAM"/>
    <property type="match status" value="1"/>
</dbReference>
<feature type="chain" id="PRO_0000374894" description="Ribosomal protein uS12 methylthiotransferase RimO">
    <location>
        <begin position="1"/>
        <end position="448"/>
    </location>
</feature>
<feature type="domain" description="MTTase N-terminal" evidence="1">
    <location>
        <begin position="16"/>
        <end position="126"/>
    </location>
</feature>
<feature type="domain" description="Radical SAM core" evidence="2">
    <location>
        <begin position="143"/>
        <end position="380"/>
    </location>
</feature>
<feature type="domain" description="TRAM" evidence="1">
    <location>
        <begin position="383"/>
        <end position="448"/>
    </location>
</feature>
<feature type="binding site" evidence="1">
    <location>
        <position position="25"/>
    </location>
    <ligand>
        <name>[4Fe-4S] cluster</name>
        <dbReference type="ChEBI" id="CHEBI:49883"/>
        <label>1</label>
    </ligand>
</feature>
<feature type="binding site" evidence="1">
    <location>
        <position position="61"/>
    </location>
    <ligand>
        <name>[4Fe-4S] cluster</name>
        <dbReference type="ChEBI" id="CHEBI:49883"/>
        <label>1</label>
    </ligand>
</feature>
<feature type="binding site" evidence="1">
    <location>
        <position position="90"/>
    </location>
    <ligand>
        <name>[4Fe-4S] cluster</name>
        <dbReference type="ChEBI" id="CHEBI:49883"/>
        <label>1</label>
    </ligand>
</feature>
<feature type="binding site" evidence="1">
    <location>
        <position position="157"/>
    </location>
    <ligand>
        <name>[4Fe-4S] cluster</name>
        <dbReference type="ChEBI" id="CHEBI:49883"/>
        <label>2</label>
        <note>4Fe-4S-S-AdoMet</note>
    </ligand>
</feature>
<feature type="binding site" evidence="1">
    <location>
        <position position="161"/>
    </location>
    <ligand>
        <name>[4Fe-4S] cluster</name>
        <dbReference type="ChEBI" id="CHEBI:49883"/>
        <label>2</label>
        <note>4Fe-4S-S-AdoMet</note>
    </ligand>
</feature>
<feature type="binding site" evidence="1">
    <location>
        <position position="164"/>
    </location>
    <ligand>
        <name>[4Fe-4S] cluster</name>
        <dbReference type="ChEBI" id="CHEBI:49883"/>
        <label>2</label>
        <note>4Fe-4S-S-AdoMet</note>
    </ligand>
</feature>
<sequence>MTATPAPRGPAPGAAPKISFVSLGCPKALVDSERILTHLRAEGYELARRHDGADVVIVNTCGFLDSAKAESLSAIGEAMAENGRVIVTGCMGAQPEEIREKYPDLLAVTGPQAYESVVAAVHEAVPPAHDPFLDLVPPQGIKLTPRHYAYLKISEGCSNRCSFCIIPSLRGNLVSRPAADVLREAEKLVKAGVKELLVVSQDTSAYGVDIRYSESPWRDRQVRAKFYDLTRELGELGAWVRLHYVYPYPHVDEVIPLMAEGKVLPYLDMPLQHASPSVLKRMRRPGNQERQLDRIRSWRQTCPDLAIRSTFIVGFPGETEAEFEELLAWLQEAKLDRVGCFEYEPVAGATANALGDPVPPAVKAERKRRFMETQNGIALRLQRAKVGKRLPVIVDSVEGGVARGRSKADAPEIDGTVHAAFRRPVRVGDIVTVKIDRAEAYDLYGSVA</sequence>
<keyword id="KW-0004">4Fe-4S</keyword>
<keyword id="KW-0963">Cytoplasm</keyword>
<keyword id="KW-0408">Iron</keyword>
<keyword id="KW-0411">Iron-sulfur</keyword>
<keyword id="KW-0479">Metal-binding</keyword>
<keyword id="KW-0949">S-adenosyl-L-methionine</keyword>
<keyword id="KW-0808">Transferase</keyword>
<protein>
    <recommendedName>
        <fullName evidence="1">Ribosomal protein uS12 methylthiotransferase RimO</fullName>
        <shortName evidence="1">uS12 MTTase</shortName>
        <shortName evidence="1">uS12 methylthiotransferase</shortName>
        <ecNumber evidence="1">2.8.4.4</ecNumber>
    </recommendedName>
    <alternativeName>
        <fullName evidence="1">Ribosomal protein uS12 (aspartate-C(3))-methylthiotransferase</fullName>
    </alternativeName>
    <alternativeName>
        <fullName evidence="1">Ribosome maturation factor RimO</fullName>
    </alternativeName>
</protein>
<comment type="function">
    <text evidence="1">Catalyzes the methylthiolation of an aspartic acid residue of ribosomal protein uS12.</text>
</comment>
<comment type="catalytic activity">
    <reaction evidence="1">
        <text>L-aspartate(89)-[ribosomal protein uS12]-hydrogen + (sulfur carrier)-SH + AH2 + 2 S-adenosyl-L-methionine = 3-methylsulfanyl-L-aspartate(89)-[ribosomal protein uS12]-hydrogen + (sulfur carrier)-H + 5'-deoxyadenosine + L-methionine + A + S-adenosyl-L-homocysteine + 2 H(+)</text>
        <dbReference type="Rhea" id="RHEA:37087"/>
        <dbReference type="Rhea" id="RHEA-COMP:10460"/>
        <dbReference type="Rhea" id="RHEA-COMP:10461"/>
        <dbReference type="Rhea" id="RHEA-COMP:14737"/>
        <dbReference type="Rhea" id="RHEA-COMP:14739"/>
        <dbReference type="ChEBI" id="CHEBI:13193"/>
        <dbReference type="ChEBI" id="CHEBI:15378"/>
        <dbReference type="ChEBI" id="CHEBI:17319"/>
        <dbReference type="ChEBI" id="CHEBI:17499"/>
        <dbReference type="ChEBI" id="CHEBI:29917"/>
        <dbReference type="ChEBI" id="CHEBI:29961"/>
        <dbReference type="ChEBI" id="CHEBI:57844"/>
        <dbReference type="ChEBI" id="CHEBI:57856"/>
        <dbReference type="ChEBI" id="CHEBI:59789"/>
        <dbReference type="ChEBI" id="CHEBI:64428"/>
        <dbReference type="ChEBI" id="CHEBI:73599"/>
        <dbReference type="EC" id="2.8.4.4"/>
    </reaction>
</comment>
<comment type="cofactor">
    <cofactor evidence="1">
        <name>[4Fe-4S] cluster</name>
        <dbReference type="ChEBI" id="CHEBI:49883"/>
    </cofactor>
    <text evidence="1">Binds 2 [4Fe-4S] clusters. One cluster is coordinated with 3 cysteines and an exchangeable S-adenosyl-L-methionine.</text>
</comment>
<comment type="subcellular location">
    <subcellularLocation>
        <location evidence="1">Cytoplasm</location>
    </subcellularLocation>
</comment>
<comment type="similarity">
    <text evidence="1">Belongs to the methylthiotransferase family. RimO subfamily.</text>
</comment>